<gene>
    <name evidence="16" type="primary">Angptl8</name>
    <name evidence="16" type="synonym">Gm6484</name>
    <name evidence="10" type="synonym">Rifl</name>
</gene>
<sequence length="198" mass="22063">MAVLALCLLWTLASAVRPAPVAPLGGPEPAQYEELTLLFHGALQLGQALNGVYRATEARLTEAGHSLGLYDRALEFLGTEVRQGQDATQELRTSLSEIQVEEDALHLRAEATARSLGEVARAQQALRDTVRRLQVQLRGAWLGQAHQEFETLKARADKQSHLLWALTGHVQRQQREMAEQQQWLRQIQQRLHTAALPA</sequence>
<evidence type="ECO:0000250" key="1">
    <source>
        <dbReference type="UniProtKB" id="Q6UXH0"/>
    </source>
</evidence>
<evidence type="ECO:0000255" key="2"/>
<evidence type="ECO:0000269" key="3">
    <source>
    </source>
</evidence>
<evidence type="ECO:0000269" key="4">
    <source>
    </source>
</evidence>
<evidence type="ECO:0000269" key="5">
    <source>
    </source>
</evidence>
<evidence type="ECO:0000269" key="6">
    <source>
    </source>
</evidence>
<evidence type="ECO:0000269" key="7">
    <source>
    </source>
</evidence>
<evidence type="ECO:0000269" key="8">
    <source>
    </source>
</evidence>
<evidence type="ECO:0000269" key="9">
    <source>
    </source>
</evidence>
<evidence type="ECO:0000303" key="10">
    <source>
    </source>
</evidence>
<evidence type="ECO:0000303" key="11">
    <source>
    </source>
</evidence>
<evidence type="ECO:0000303" key="12">
    <source>
    </source>
</evidence>
<evidence type="ECO:0000305" key="13"/>
<evidence type="ECO:0000305" key="14">
    <source>
    </source>
</evidence>
<evidence type="ECO:0000305" key="15">
    <source>
    </source>
</evidence>
<evidence type="ECO:0000312" key="16">
    <source>
        <dbReference type="MGI" id="MGI:3643534"/>
    </source>
</evidence>
<feature type="signal peptide" evidence="2">
    <location>
        <begin position="1"/>
        <end position="15"/>
    </location>
</feature>
<feature type="chain" id="PRO_0000319618" description="Angiopoietin-like protein 8">
    <location>
        <begin position="16"/>
        <end position="198"/>
    </location>
</feature>
<feature type="sequence conflict" description="In Ref. 2; AAH24408." evidence="13" ref="2">
    <original>A</original>
    <variation>T</variation>
    <location>
        <position position="19"/>
    </location>
</feature>
<proteinExistence type="evidence at transcript level"/>
<comment type="function">
    <text evidence="4 5 6 8">Hormone that acts as a blood lipid regulator by regulating serum triglyceride levels (PubMed:22569073, PubMed:22809513, PubMed:23150577, PubMed:24043787). May be involved in the metabolic transition between fasting and refeeding: required to direct fatty acids to adipose tissue for storage in the fed state (PubMed:24043787). According to a report, may act by promoting ANGPTL3 cleavage (PubMed:23150577). According to another study, not required for cleavage of ANGPTL3 (PubMed:24043787).</text>
</comment>
<comment type="subunit">
    <text evidence="1">Interacts with ANGPTL3.</text>
</comment>
<comment type="subcellular location">
    <subcellularLocation>
        <location evidence="4">Secreted</location>
    </subcellularLocation>
</comment>
<comment type="tissue specificity">
    <text evidence="4 5">Expressed in liver and fat. Enriched in white and brown adipose tissues.</text>
</comment>
<comment type="developmental stage">
    <text evidence="4">Expressed during adipogenesis.</text>
</comment>
<comment type="induction">
    <text evidence="5 6 7">Highly up-regulated following high-fat diet treatment. Down-regulated upon fasting. Strongly induced in the cold environment (4 Degrees Celsius for 4 hours).</text>
</comment>
<comment type="PTM">
    <text evidence="1">Proteolytically cleaved at the N-terminus.</text>
</comment>
<comment type="disruption phenotype">
    <text evidence="3 8 9">Reduced levels of serum triglyceride (PubMed:20562862, PubMed:24043787). Mice gain weight more slowly than wild-type littermates due to a reduction in adipose tissue accretion. Plasma levels of triglycerides are similar to wild-type animals in the fasted state but decreased after refeeding. The lower triglyceride levels are associated with a reduction in very low density lipoprotein secretion and an increase in lipoprotein lipase (LPL) activity (PubMed:24043787). Glucose and insulin tolerance are not affected and no alterations in glucose homeostasis are observed in mice fed either a chow or high fat diet (PubMed:24043787). Moreover, deletion does not affect the compensatory proliferation of pancreatic beta cells in response to insulin resistance induced by a high-fat diet or treatment with the insulin antagonist S961 (PubMed:25417115).</text>
</comment>
<comment type="similarity">
    <text evidence="13">Belongs to the ANGPTL8 family.</text>
</comment>
<comment type="caution">
    <text evidence="9 14 15">Initially reported to specifically promote pancreatic beta cell proliferation without insulin resistance and to promote beta cell mass expansion, thereby improving glucose tolerance (PubMed:23623304). However, this result could not be confirmed by further studies and the original paper was later retracted (PubMed:28038792). The lack of a role in beta cell proliferation was also confirmed in another study (PubMed:25417115).</text>
</comment>
<keyword id="KW-0372">Hormone</keyword>
<keyword id="KW-0443">Lipid metabolism</keyword>
<keyword id="KW-1185">Reference proteome</keyword>
<keyword id="KW-0964">Secreted</keyword>
<keyword id="KW-0732">Signal</keyword>
<dbReference type="EMBL" id="AC166992">
    <property type="status" value="NOT_ANNOTATED_CDS"/>
    <property type="molecule type" value="Genomic_DNA"/>
</dbReference>
<dbReference type="EMBL" id="BC024408">
    <property type="protein sequence ID" value="AAH24408.1"/>
    <property type="molecule type" value="mRNA"/>
</dbReference>
<dbReference type="CCDS" id="CCDS40556.1"/>
<dbReference type="RefSeq" id="NP_001074409.1">
    <property type="nucleotide sequence ID" value="NM_001080940.1"/>
</dbReference>
<dbReference type="SMR" id="Q8R1L8"/>
<dbReference type="BioGRID" id="550761">
    <property type="interactions" value="2"/>
</dbReference>
<dbReference type="FunCoup" id="Q8R1L8">
    <property type="interactions" value="199"/>
</dbReference>
<dbReference type="STRING" id="10090.ENSMUSP00000058951"/>
<dbReference type="PhosphoSitePlus" id="Q8R1L8"/>
<dbReference type="jPOST" id="Q8R1L8"/>
<dbReference type="PaxDb" id="10090-ENSMUSP00000058951"/>
<dbReference type="ProteomicsDB" id="296231"/>
<dbReference type="Antibodypedia" id="25764">
    <property type="antibodies" value="273 antibodies from 26 providers"/>
</dbReference>
<dbReference type="Ensembl" id="ENSMUST00000058777.8">
    <property type="protein sequence ID" value="ENSMUSP00000058951.7"/>
    <property type="gene ID" value="ENSMUSG00000047822.9"/>
</dbReference>
<dbReference type="GeneID" id="624219"/>
<dbReference type="KEGG" id="mmu:624219"/>
<dbReference type="UCSC" id="uc009omr.1">
    <property type="organism name" value="mouse"/>
</dbReference>
<dbReference type="AGR" id="MGI:3643534"/>
<dbReference type="CTD" id="55908"/>
<dbReference type="MGI" id="MGI:3643534">
    <property type="gene designation" value="Angptl8"/>
</dbReference>
<dbReference type="VEuPathDB" id="HostDB:ENSMUSG00000047822"/>
<dbReference type="eggNOG" id="ENOG502SF52">
    <property type="taxonomic scope" value="Eukaryota"/>
</dbReference>
<dbReference type="GeneTree" id="ENSGT00440000034383"/>
<dbReference type="HOGENOM" id="CLU_097765_0_0_1"/>
<dbReference type="InParanoid" id="Q8R1L8"/>
<dbReference type="OMA" id="SHIVWAL"/>
<dbReference type="OrthoDB" id="8951891at2759"/>
<dbReference type="PhylomeDB" id="Q8R1L8"/>
<dbReference type="TreeFam" id="TF337951"/>
<dbReference type="Reactome" id="R-MMU-8963889">
    <property type="pathway name" value="Assembly of active LPL and LIPC lipase complexes"/>
</dbReference>
<dbReference type="BioGRID-ORCS" id="624219">
    <property type="hits" value="1 hit in 39 CRISPR screens"/>
</dbReference>
<dbReference type="ChiTaRS" id="Angptl8">
    <property type="organism name" value="mouse"/>
</dbReference>
<dbReference type="PRO" id="PR:Q8R1L8"/>
<dbReference type="Proteomes" id="UP000000589">
    <property type="component" value="Chromosome 9"/>
</dbReference>
<dbReference type="RNAct" id="Q8R1L8">
    <property type="molecule type" value="protein"/>
</dbReference>
<dbReference type="Bgee" id="ENSMUSG00000047822">
    <property type="expression patterns" value="Expressed in left lobe of liver and 58 other cell types or tissues"/>
</dbReference>
<dbReference type="ExpressionAtlas" id="Q8R1L8">
    <property type="expression patterns" value="baseline and differential"/>
</dbReference>
<dbReference type="GO" id="GO:0005576">
    <property type="term" value="C:extracellular region"/>
    <property type="evidence" value="ECO:0007669"/>
    <property type="project" value="UniProtKB-SubCell"/>
</dbReference>
<dbReference type="GO" id="GO:0005179">
    <property type="term" value="F:hormone activity"/>
    <property type="evidence" value="ECO:0007669"/>
    <property type="project" value="UniProtKB-KW"/>
</dbReference>
<dbReference type="GO" id="GO:0048469">
    <property type="term" value="P:cell maturation"/>
    <property type="evidence" value="ECO:0000315"/>
    <property type="project" value="MGI"/>
</dbReference>
<dbReference type="GO" id="GO:0045444">
    <property type="term" value="P:fat cell differentiation"/>
    <property type="evidence" value="ECO:0000315"/>
    <property type="project" value="UniProtKB"/>
</dbReference>
<dbReference type="GO" id="GO:0006629">
    <property type="term" value="P:lipid metabolic process"/>
    <property type="evidence" value="ECO:0000315"/>
    <property type="project" value="UniProtKB"/>
</dbReference>
<dbReference type="GO" id="GO:0051005">
    <property type="term" value="P:negative regulation of lipoprotein lipase activity"/>
    <property type="evidence" value="ECO:0000304"/>
    <property type="project" value="UniProtKB"/>
</dbReference>
<dbReference type="GO" id="GO:0010954">
    <property type="term" value="P:positive regulation of protein processing"/>
    <property type="evidence" value="ECO:0000266"/>
    <property type="project" value="MGI"/>
</dbReference>
<dbReference type="GO" id="GO:0019216">
    <property type="term" value="P:regulation of lipid metabolic process"/>
    <property type="evidence" value="ECO:0000315"/>
    <property type="project" value="UniProtKB"/>
</dbReference>
<dbReference type="GO" id="GO:0050746">
    <property type="term" value="P:regulation of lipoprotein metabolic process"/>
    <property type="evidence" value="ECO:0000315"/>
    <property type="project" value="UniProtKB"/>
</dbReference>
<dbReference type="GO" id="GO:0070328">
    <property type="term" value="P:triglyceride homeostasis"/>
    <property type="evidence" value="ECO:0000315"/>
    <property type="project" value="UniProtKB"/>
</dbReference>
<dbReference type="InterPro" id="IPR026614">
    <property type="entry name" value="ANGPTL8"/>
</dbReference>
<dbReference type="PANTHER" id="PTHR21463">
    <property type="entry name" value="ANGIOPOIETIN-LIKE PROTEIN 8"/>
    <property type="match status" value="1"/>
</dbReference>
<dbReference type="PANTHER" id="PTHR21463:SF0">
    <property type="entry name" value="ANGIOPOIETIN-LIKE PROTEIN 8"/>
    <property type="match status" value="1"/>
</dbReference>
<accession>Q8R1L8</accession>
<name>ANGL8_MOUSE</name>
<reference key="1">
    <citation type="journal article" date="2009" name="PLoS Biol.">
        <title>Lineage-specific biology revealed by a finished genome assembly of the mouse.</title>
        <authorList>
            <person name="Church D.M."/>
            <person name="Goodstadt L."/>
            <person name="Hillier L.W."/>
            <person name="Zody M.C."/>
            <person name="Goldstein S."/>
            <person name="She X."/>
            <person name="Bult C.J."/>
            <person name="Agarwala R."/>
            <person name="Cherry J.L."/>
            <person name="DiCuccio M."/>
            <person name="Hlavina W."/>
            <person name="Kapustin Y."/>
            <person name="Meric P."/>
            <person name="Maglott D."/>
            <person name="Birtle Z."/>
            <person name="Marques A.C."/>
            <person name="Graves T."/>
            <person name="Zhou S."/>
            <person name="Teague B."/>
            <person name="Potamousis K."/>
            <person name="Churas C."/>
            <person name="Place M."/>
            <person name="Herschleb J."/>
            <person name="Runnheim R."/>
            <person name="Forrest D."/>
            <person name="Amos-Landgraf J."/>
            <person name="Schwartz D.C."/>
            <person name="Cheng Z."/>
            <person name="Lindblad-Toh K."/>
            <person name="Eichler E.E."/>
            <person name="Ponting C.P."/>
        </authorList>
    </citation>
    <scope>NUCLEOTIDE SEQUENCE [LARGE SCALE GENOMIC DNA]</scope>
    <source>
        <strain>C57BL/6J</strain>
    </source>
</reference>
<reference key="2">
    <citation type="journal article" date="2004" name="Genome Res.">
        <title>The status, quality, and expansion of the NIH full-length cDNA project: the Mammalian Gene Collection (MGC).</title>
        <authorList>
            <consortium name="The MGC Project Team"/>
        </authorList>
    </citation>
    <scope>NUCLEOTIDE SEQUENCE [LARGE SCALE MRNA] OF 18-181</scope>
    <source>
        <strain>FVB/N</strain>
        <tissue>Liver</tissue>
    </source>
</reference>
<reference key="3">
    <citation type="journal article" date="2010" name="Nat. Biotechnol.">
        <title>A mouse knockout library for secreted and transmembrane proteins.</title>
        <authorList>
            <person name="Tang T."/>
            <person name="Li L."/>
            <person name="Tang J."/>
            <person name="Li Y."/>
            <person name="Lin W.Y."/>
            <person name="Martin F."/>
            <person name="Grant D."/>
            <person name="Solloway M."/>
            <person name="Parker L."/>
            <person name="Ye W."/>
            <person name="Forrest W."/>
            <person name="Ghilardi N."/>
            <person name="Oravecz T."/>
            <person name="Platt K.A."/>
            <person name="Rice D.S."/>
            <person name="Hansen G.M."/>
            <person name="Abuin A."/>
            <person name="Eberhart D.E."/>
            <person name="Godowski P."/>
            <person name="Holt K.H."/>
            <person name="Peterson A."/>
            <person name="Zambrowicz B.P."/>
            <person name="de Sauvage F.J."/>
        </authorList>
    </citation>
    <scope>DISRUPTION PHENOTYPE</scope>
</reference>
<reference key="4">
    <citation type="journal article" date="2012" name="Am. J. Physiol.">
        <title>Identification of RIFL, a novel adipocyte-enriched insulin target gene with a role in lipid metabolism.</title>
        <authorList>
            <person name="Ren G."/>
            <person name="Kim J.Y."/>
            <person name="Smas C.M."/>
        </authorList>
    </citation>
    <scope>FUNCTION</scope>
    <scope>SUBCELLULAR LOCATION</scope>
    <scope>TISSUE SPECIFICITY</scope>
    <scope>DEVELOPMENTAL STAGE</scope>
</reference>
<reference key="5">
    <citation type="journal article" date="2012" name="Biochem. Biophys. Res. Commun.">
        <title>Lipasin, a novel nutritionally-regulated liver-enriched factor that regulates serum triglyceride levels.</title>
        <authorList>
            <person name="Zhang R."/>
        </authorList>
    </citation>
    <scope>FUNCTION</scope>
    <scope>TISSUE SPECIFICITY</scope>
    <scope>INDUCTION</scope>
</reference>
<reference key="6">
    <citation type="journal article" date="2013" name="Biochem. Biophys. Res. Commun.">
        <title>Lipasin, thermoregulated in brown fat, is a novel but atypical member of the angiopoietin-like protein family.</title>
        <authorList>
            <person name="Fu Z."/>
            <person name="Yao F."/>
            <person name="Abou-Samra A.B."/>
            <person name="Zhang R."/>
        </authorList>
    </citation>
    <scope>INDUCTION</scope>
</reference>
<reference key="7">
    <citation type="journal article" date="2012" name="Proc. Natl. Acad. Sci. U.S.A.">
        <title>Atypical angiopoietin-like protein that regulates ANGPTL3.</title>
        <authorList>
            <person name="Quagliarini F."/>
            <person name="Wang Y."/>
            <person name="Kozlitina J."/>
            <person name="Grishin N.V."/>
            <person name="Hyde R."/>
            <person name="Boerwinkle E."/>
            <person name="Valenzuela D.M."/>
            <person name="Murphy A.J."/>
            <person name="Cohen J.C."/>
            <person name="Hobbs H.H."/>
        </authorList>
    </citation>
    <scope>FUNCTION</scope>
    <scope>INDUCTION</scope>
</reference>
<reference key="8">
    <citation type="journal article" date="2013" name="Cell">
        <title>Betatrophin: a hormone that controls pancreatic beta cell proliferation.</title>
        <authorList>
            <person name="Yi P."/>
            <person name="Park J.S."/>
            <person name="Melton D.A."/>
        </authorList>
    </citation>
    <scope>RETRACTED PAPER</scope>
</reference>
<reference key="9">
    <citation type="journal article" date="2017" name="Cell">
        <authorList>
            <person name="Yi P."/>
            <person name="Park J.S."/>
            <person name="Melton D.A."/>
        </authorList>
    </citation>
    <scope>RETRACTION NOTICE OF PUBMED:23623304</scope>
</reference>
<reference key="10">
    <citation type="journal article" date="2013" name="Proc. Natl. Acad. Sci. U.S.A.">
        <title>Mice lacking ANGPTL8 (Betatrophin) manifest disrupted triglyceride metabolism without impaired glucose homeostasis.</title>
        <authorList>
            <person name="Wang Y."/>
            <person name="Quagliarini F."/>
            <person name="Gusarova V."/>
            <person name="Gromada J."/>
            <person name="Valenzuela D.M."/>
            <person name="Cohen J.C."/>
            <person name="Hobbs H.H."/>
        </authorList>
    </citation>
    <scope>FUNCTION</scope>
    <scope>DISRUPTION PHENOTYPE</scope>
</reference>
<reference key="11">
    <citation type="journal article" date="2014" name="Diabetes">
        <title>Elevated mouse hepatic betatrophin expression does not increase human beta-cell replication in the transplant setting.</title>
        <authorList>
            <person name="Jiao Y."/>
            <person name="Le Lay J."/>
            <person name="Yu M."/>
            <person name="Naji A."/>
            <person name="Kaestner K.H."/>
        </authorList>
    </citation>
    <scope>EXPRESSION IN HUMAN PANCREATIC BETA-CELLS</scope>
</reference>
<reference key="12">
    <citation type="journal article" date="2014" name="Cell">
        <title>ANGPTL8/betatrophin does not control pancreatic beta cell expansion.</title>
        <authorList>
            <person name="Gusarova V."/>
            <person name="Alexa C.A."/>
            <person name="Na A."/>
            <person name="Stevis P.E."/>
            <person name="Xin Y."/>
            <person name="Bonner-Weir S."/>
            <person name="Cohen J.C."/>
            <person name="Hobbs H.H."/>
            <person name="Murphy A.J."/>
            <person name="Yancopoulos G.D."/>
            <person name="Gromada J."/>
        </authorList>
    </citation>
    <scope>DISRUPTION PHENOTYPE</scope>
</reference>
<protein>
    <recommendedName>
        <fullName evidence="16">Angiopoietin-like protein 8</fullName>
    </recommendedName>
    <alternativeName>
        <fullName evidence="12">Betatrophin</fullName>
    </alternativeName>
    <alternativeName>
        <fullName evidence="11">Lipasin</fullName>
    </alternativeName>
    <alternativeName>
        <fullName evidence="10">Refeeding-induced fat and liver protein</fullName>
    </alternativeName>
</protein>
<organism>
    <name type="scientific">Mus musculus</name>
    <name type="common">Mouse</name>
    <dbReference type="NCBI Taxonomy" id="10090"/>
    <lineage>
        <taxon>Eukaryota</taxon>
        <taxon>Metazoa</taxon>
        <taxon>Chordata</taxon>
        <taxon>Craniata</taxon>
        <taxon>Vertebrata</taxon>
        <taxon>Euteleostomi</taxon>
        <taxon>Mammalia</taxon>
        <taxon>Eutheria</taxon>
        <taxon>Euarchontoglires</taxon>
        <taxon>Glires</taxon>
        <taxon>Rodentia</taxon>
        <taxon>Myomorpha</taxon>
        <taxon>Muroidea</taxon>
        <taxon>Muridae</taxon>
        <taxon>Murinae</taxon>
        <taxon>Mus</taxon>
        <taxon>Mus</taxon>
    </lineage>
</organism>